<sequence length="494" mass="56901">MTNWQQQLPLTDTQKNELDKSVLRYLNWNYKQTVRHEHAQDYESVRHAIVTLSGFLLQESVDRQEFISNNDTSNESMVDIDELLLPKKWNSIVRLQKKIIELEQNTETLVSQIKDLNTQVSELAQFKPTTSNGTSAHNVLKWIPRNLPSCLINVESSVTSVKLHPNLPIVFVATDHGKLYAFDLFNYTIPLASLQSHTKAITSMDVLFTNYTNSSKKNYLVIVTASKDLQIHVFKWVSEECKFQQIRSLLGHEHIVSAVKIWQKNNDVHIASCSRDQTVKIWDFHNGWSLKTFQPHSQWVRSIDVLGDYIISGSHDTTLRLTHWPSGNGLSVGTGHEFPIEKVKFIHFIEDSPEIRFRTPSTDRYKNWGMQYCVSASRDRTIKIWEIPLPTLMAHRAPIPNPTDSNFRCVLTLKGHLSWVRDISIRGQYLFSCADDKSVRCWDLNTGQCLHVWEKLHTGFVNCLDLDVDFDSNVTPRQMMVTGGLDCKSNVFMR</sequence>
<reference key="1">
    <citation type="journal article" date="2007" name="Proc. Natl. Acad. Sci. U.S.A.">
        <title>Genome sequencing and comparative analysis of Saccharomyces cerevisiae strain YJM789.</title>
        <authorList>
            <person name="Wei W."/>
            <person name="McCusker J.H."/>
            <person name="Hyman R.W."/>
            <person name="Jones T."/>
            <person name="Ning Y."/>
            <person name="Cao Z."/>
            <person name="Gu Z."/>
            <person name="Bruno D."/>
            <person name="Miranda M."/>
            <person name="Nguyen M."/>
            <person name="Wilhelmy J."/>
            <person name="Komp C."/>
            <person name="Tamse R."/>
            <person name="Wang X."/>
            <person name="Jia P."/>
            <person name="Luedi P."/>
            <person name="Oefner P.J."/>
            <person name="David L."/>
            <person name="Dietrich F.S."/>
            <person name="Li Y."/>
            <person name="Davis R.W."/>
            <person name="Steinmetz L.M."/>
        </authorList>
    </citation>
    <scope>NUCLEOTIDE SEQUENCE [LARGE SCALE GENOMIC DNA]</scope>
    <source>
        <strain>YJM789</strain>
    </source>
</reference>
<organism>
    <name type="scientific">Saccharomyces cerevisiae (strain YJM789)</name>
    <name type="common">Baker's yeast</name>
    <dbReference type="NCBI Taxonomy" id="307796"/>
    <lineage>
        <taxon>Eukaryota</taxon>
        <taxon>Fungi</taxon>
        <taxon>Dikarya</taxon>
        <taxon>Ascomycota</taxon>
        <taxon>Saccharomycotina</taxon>
        <taxon>Saccharomycetes</taxon>
        <taxon>Saccharomycetales</taxon>
        <taxon>Saccharomycetaceae</taxon>
        <taxon>Saccharomyces</taxon>
    </lineage>
</organism>
<dbReference type="EMBL" id="AAFW02000032">
    <property type="protein sequence ID" value="EDN63596.1"/>
    <property type="molecule type" value="Genomic_DNA"/>
</dbReference>
<dbReference type="EMDB" id="EMD-8673"/>
<dbReference type="EMDB" id="EMD-8706"/>
<dbReference type="SMR" id="A6ZPA6"/>
<dbReference type="HOGENOM" id="CLU_000288_57_15_1"/>
<dbReference type="Proteomes" id="UP000007060">
    <property type="component" value="Unassembled WGS sequence"/>
</dbReference>
<dbReference type="GO" id="GO:0005737">
    <property type="term" value="C:cytoplasm"/>
    <property type="evidence" value="ECO:0007669"/>
    <property type="project" value="UniProtKB-UniRule"/>
</dbReference>
<dbReference type="GO" id="GO:0005874">
    <property type="term" value="C:microtubule"/>
    <property type="evidence" value="ECO:0007669"/>
    <property type="project" value="UniProtKB-KW"/>
</dbReference>
<dbReference type="GO" id="GO:0005875">
    <property type="term" value="C:microtubule associated complex"/>
    <property type="evidence" value="ECO:0007669"/>
    <property type="project" value="UniProtKB-UniRule"/>
</dbReference>
<dbReference type="GO" id="GO:0000922">
    <property type="term" value="C:spindle pole"/>
    <property type="evidence" value="ECO:0007669"/>
    <property type="project" value="UniProtKB-SubCell"/>
</dbReference>
<dbReference type="GO" id="GO:0070840">
    <property type="term" value="F:dynein complex binding"/>
    <property type="evidence" value="ECO:0007669"/>
    <property type="project" value="UniProtKB-UniRule"/>
</dbReference>
<dbReference type="GO" id="GO:0051301">
    <property type="term" value="P:cell division"/>
    <property type="evidence" value="ECO:0007669"/>
    <property type="project" value="UniProtKB-KW"/>
</dbReference>
<dbReference type="GO" id="GO:0000132">
    <property type="term" value="P:establishment of mitotic spindle orientation"/>
    <property type="evidence" value="ECO:0007669"/>
    <property type="project" value="UniProtKB-UniRule"/>
</dbReference>
<dbReference type="GO" id="GO:0051012">
    <property type="term" value="P:microtubule sliding"/>
    <property type="evidence" value="ECO:0007669"/>
    <property type="project" value="UniProtKB-UniRule"/>
</dbReference>
<dbReference type="CDD" id="cd00200">
    <property type="entry name" value="WD40"/>
    <property type="match status" value="1"/>
</dbReference>
<dbReference type="FunFam" id="2.130.10.10:FF:000902">
    <property type="entry name" value="Nuclear distribution protein PAC1"/>
    <property type="match status" value="1"/>
</dbReference>
<dbReference type="Gene3D" id="1.20.960.30">
    <property type="match status" value="1"/>
</dbReference>
<dbReference type="Gene3D" id="2.130.10.10">
    <property type="entry name" value="YVTN repeat-like/Quinoprotein amine dehydrogenase"/>
    <property type="match status" value="1"/>
</dbReference>
<dbReference type="HAMAP" id="MF_03141">
    <property type="entry name" value="lis1"/>
    <property type="match status" value="1"/>
</dbReference>
<dbReference type="InterPro" id="IPR017252">
    <property type="entry name" value="Dynein_regulator_LIS1"/>
</dbReference>
<dbReference type="InterPro" id="IPR020472">
    <property type="entry name" value="G-protein_beta_WD-40_rep"/>
</dbReference>
<dbReference type="InterPro" id="IPR037190">
    <property type="entry name" value="LIS1_N"/>
</dbReference>
<dbReference type="InterPro" id="IPR015943">
    <property type="entry name" value="WD40/YVTN_repeat-like_dom_sf"/>
</dbReference>
<dbReference type="InterPro" id="IPR019775">
    <property type="entry name" value="WD40_repeat_CS"/>
</dbReference>
<dbReference type="InterPro" id="IPR036322">
    <property type="entry name" value="WD40_repeat_dom_sf"/>
</dbReference>
<dbReference type="InterPro" id="IPR001680">
    <property type="entry name" value="WD40_rpt"/>
</dbReference>
<dbReference type="PANTHER" id="PTHR19848:SF8">
    <property type="entry name" value="F-BOX AND WD REPEAT DOMAIN CONTAINING 7"/>
    <property type="match status" value="1"/>
</dbReference>
<dbReference type="PANTHER" id="PTHR19848">
    <property type="entry name" value="WD40 REPEAT PROTEIN"/>
    <property type="match status" value="1"/>
</dbReference>
<dbReference type="Pfam" id="PF00400">
    <property type="entry name" value="WD40"/>
    <property type="match status" value="4"/>
</dbReference>
<dbReference type="PIRSF" id="PIRSF037647">
    <property type="entry name" value="Dynein_regulator_Lis1"/>
    <property type="match status" value="1"/>
</dbReference>
<dbReference type="PRINTS" id="PR00320">
    <property type="entry name" value="GPROTEINBRPT"/>
</dbReference>
<dbReference type="SMART" id="SM00320">
    <property type="entry name" value="WD40"/>
    <property type="match status" value="7"/>
</dbReference>
<dbReference type="SUPFAM" id="SSF109925">
    <property type="entry name" value="Lissencephaly-1 protein (Lis-1, PAF-AH alpha) N-terminal domain"/>
    <property type="match status" value="1"/>
</dbReference>
<dbReference type="SUPFAM" id="SSF50978">
    <property type="entry name" value="WD40 repeat-like"/>
    <property type="match status" value="1"/>
</dbReference>
<dbReference type="PROSITE" id="PS00678">
    <property type="entry name" value="WD_REPEATS_1"/>
    <property type="match status" value="2"/>
</dbReference>
<dbReference type="PROSITE" id="PS50082">
    <property type="entry name" value="WD_REPEATS_2"/>
    <property type="match status" value="2"/>
</dbReference>
<dbReference type="PROSITE" id="PS50294">
    <property type="entry name" value="WD_REPEATS_REGION"/>
    <property type="match status" value="1"/>
</dbReference>
<comment type="function">
    <text evidence="1">Positively regulates the activity of the minus-end directed microtubule motor protein dynein. Plays a central role in positioning the mitotic spindle at the bud neck during cell division. Targets cytoplasmic dynein to microtubule plus ends, thereby promoting dynein-mediated microtubule sliding along the bud cortex and consequently the movement of the mitotic spindle to the bud neck.</text>
</comment>
<comment type="subunit">
    <text evidence="1">Self-associates. Interacts with NDL1 and dynein.</text>
</comment>
<comment type="subcellular location">
    <subcellularLocation>
        <location evidence="1">Cytoplasm</location>
        <location evidence="1">Cytoskeleton</location>
    </subcellularLocation>
    <subcellularLocation>
        <location evidence="1">Cytoplasm</location>
        <location evidence="1">Cytoskeleton</location>
        <location evidence="1">Spindle pole</location>
    </subcellularLocation>
    <text evidence="1">Localizes to the plus ends of microtubules and the mitotic spindle poles.</text>
</comment>
<comment type="domain">
    <text evidence="1">Dimerization mediated by the LisH domain may be required to activate dynein.</text>
</comment>
<comment type="similarity">
    <text evidence="1">Belongs to the WD repeat LIS1/nudF family.</text>
</comment>
<keyword id="KW-0131">Cell cycle</keyword>
<keyword id="KW-0132">Cell division</keyword>
<keyword id="KW-0175">Coiled coil</keyword>
<keyword id="KW-0963">Cytoplasm</keyword>
<keyword id="KW-0206">Cytoskeleton</keyword>
<keyword id="KW-0493">Microtubule</keyword>
<keyword id="KW-0498">Mitosis</keyword>
<keyword id="KW-0677">Repeat</keyword>
<keyword id="KW-0813">Transport</keyword>
<keyword id="KW-0853">WD repeat</keyword>
<protein>
    <recommendedName>
        <fullName evidence="1">Nuclear distribution protein PAC1</fullName>
    </recommendedName>
    <alternativeName>
        <fullName evidence="1">Lissencephaly-1 homolog</fullName>
        <shortName evidence="1">LIS-1</shortName>
    </alternativeName>
    <alternativeName>
        <fullName evidence="1">nudF homolog</fullName>
    </alternativeName>
</protein>
<evidence type="ECO:0000255" key="1">
    <source>
        <dbReference type="HAMAP-Rule" id="MF_03141"/>
    </source>
</evidence>
<name>LIS1_YEAS7</name>
<feature type="chain" id="PRO_0000405104" description="Nuclear distribution protein PAC1">
    <location>
        <begin position="1"/>
        <end position="494"/>
    </location>
</feature>
<feature type="domain" description="LisH" evidence="1">
    <location>
        <begin position="14"/>
        <end position="46"/>
    </location>
</feature>
<feature type="repeat" description="WD 1">
    <location>
        <begin position="153"/>
        <end position="192"/>
    </location>
</feature>
<feature type="repeat" description="WD 2">
    <location>
        <begin position="196"/>
        <end position="244"/>
    </location>
</feature>
<feature type="repeat" description="WD 3">
    <location>
        <begin position="251"/>
        <end position="292"/>
    </location>
</feature>
<feature type="repeat" description="WD 4">
    <location>
        <begin position="295"/>
        <end position="334"/>
    </location>
</feature>
<feature type="repeat" description="WD 5">
    <location>
        <begin position="347"/>
        <end position="395"/>
    </location>
</feature>
<feature type="repeat" description="WD 6">
    <location>
        <begin position="415"/>
        <end position="454"/>
    </location>
</feature>
<feature type="repeat" description="WD 7">
    <location>
        <begin position="457"/>
        <end position="492"/>
    </location>
</feature>
<feature type="coiled-coil region" evidence="1">
    <location>
        <begin position="90"/>
        <end position="123"/>
    </location>
</feature>
<accession>A6ZPA6</accession>
<gene>
    <name evidence="1" type="primary">PAC1</name>
    <name evidence="1" type="synonym">LIS1</name>
    <name type="ORF">SCY_5321</name>
</gene>
<proteinExistence type="inferred from homology"/>